<organism>
    <name type="scientific">Leptospira interrogans serogroup Icterohaemorrhagiae serovar Lai (strain 56601)</name>
    <dbReference type="NCBI Taxonomy" id="189518"/>
    <lineage>
        <taxon>Bacteria</taxon>
        <taxon>Pseudomonadati</taxon>
        <taxon>Spirochaetota</taxon>
        <taxon>Spirochaetia</taxon>
        <taxon>Leptospirales</taxon>
        <taxon>Leptospiraceae</taxon>
        <taxon>Leptospira</taxon>
    </lineage>
</organism>
<keyword id="KW-0032">Aminotransferase</keyword>
<keyword id="KW-0663">Pyridoxal phosphate</keyword>
<keyword id="KW-1185">Reference proteome</keyword>
<keyword id="KW-0808">Transferase</keyword>
<protein>
    <recommendedName>
        <fullName evidence="1">LL-diaminopimelate aminotransferase</fullName>
        <shortName evidence="1">DAP-AT</shortName>
        <shortName evidence="1">DAP-aminotransferase</shortName>
        <shortName evidence="1">LL-DAP-aminotransferase</shortName>
        <ecNumber evidence="1">2.6.1.83</ecNumber>
    </recommendedName>
</protein>
<proteinExistence type="inferred from homology"/>
<reference key="1">
    <citation type="journal article" date="2003" name="Nature">
        <title>Unique physiological and pathogenic features of Leptospira interrogans revealed by whole-genome sequencing.</title>
        <authorList>
            <person name="Ren S.-X."/>
            <person name="Fu G."/>
            <person name="Jiang X.-G."/>
            <person name="Zeng R."/>
            <person name="Miao Y.-G."/>
            <person name="Xu H."/>
            <person name="Zhang Y.-X."/>
            <person name="Xiong H."/>
            <person name="Lu G."/>
            <person name="Lu L.-F."/>
            <person name="Jiang H.-Q."/>
            <person name="Jia J."/>
            <person name="Tu Y.-F."/>
            <person name="Jiang J.-X."/>
            <person name="Gu W.-Y."/>
            <person name="Zhang Y.-Q."/>
            <person name="Cai Z."/>
            <person name="Sheng H.-H."/>
            <person name="Yin H.-F."/>
            <person name="Zhang Y."/>
            <person name="Zhu G.-F."/>
            <person name="Wan M."/>
            <person name="Huang H.-L."/>
            <person name="Qian Z."/>
            <person name="Wang S.-Y."/>
            <person name="Ma W."/>
            <person name="Yao Z.-J."/>
            <person name="Shen Y."/>
            <person name="Qiang B.-Q."/>
            <person name="Xia Q.-C."/>
            <person name="Guo X.-K."/>
            <person name="Danchin A."/>
            <person name="Saint Girons I."/>
            <person name="Somerville R.L."/>
            <person name="Wen Y.-M."/>
            <person name="Shi M.-H."/>
            <person name="Chen Z."/>
            <person name="Xu J.-G."/>
            <person name="Zhao G.-P."/>
        </authorList>
    </citation>
    <scope>NUCLEOTIDE SEQUENCE [LARGE SCALE GENOMIC DNA]</scope>
    <source>
        <strain>56601</strain>
    </source>
</reference>
<name>DAPAT_LEPIN</name>
<dbReference type="EC" id="2.6.1.83" evidence="1"/>
<dbReference type="EMBL" id="AE010300">
    <property type="protein sequence ID" value="AAN47975.1"/>
    <property type="molecule type" value="Genomic_DNA"/>
</dbReference>
<dbReference type="RefSeq" id="NP_710957.1">
    <property type="nucleotide sequence ID" value="NC_004342.2"/>
</dbReference>
<dbReference type="RefSeq" id="WP_001284165.1">
    <property type="nucleotide sequence ID" value="NC_004342.2"/>
</dbReference>
<dbReference type="SMR" id="Q8F814"/>
<dbReference type="STRING" id="189518.LA_0776"/>
<dbReference type="PaxDb" id="189518-LA_0776"/>
<dbReference type="EnsemblBacteria" id="AAN47975">
    <property type="protein sequence ID" value="AAN47975"/>
    <property type="gene ID" value="LA_0776"/>
</dbReference>
<dbReference type="KEGG" id="lil:LA_0776"/>
<dbReference type="PATRIC" id="fig|189518.3.peg.782"/>
<dbReference type="HOGENOM" id="CLU_051433_0_0_12"/>
<dbReference type="InParanoid" id="Q8F814"/>
<dbReference type="OrthoDB" id="9813612at2"/>
<dbReference type="UniPathway" id="UPA00034">
    <property type="reaction ID" value="UER00466"/>
</dbReference>
<dbReference type="Proteomes" id="UP000001408">
    <property type="component" value="Chromosome I"/>
</dbReference>
<dbReference type="GO" id="GO:0010285">
    <property type="term" value="F:L,L-diaminopimelate aminotransferase activity"/>
    <property type="evidence" value="ECO:0007669"/>
    <property type="project" value="UniProtKB-UniRule"/>
</dbReference>
<dbReference type="GO" id="GO:0030170">
    <property type="term" value="F:pyridoxal phosphate binding"/>
    <property type="evidence" value="ECO:0007669"/>
    <property type="project" value="UniProtKB-UniRule"/>
</dbReference>
<dbReference type="GO" id="GO:0033362">
    <property type="term" value="P:lysine biosynthetic process via diaminopimelate, diaminopimelate-aminotransferase pathway"/>
    <property type="evidence" value="ECO:0007669"/>
    <property type="project" value="UniProtKB-UniRule"/>
</dbReference>
<dbReference type="CDD" id="cd00609">
    <property type="entry name" value="AAT_like"/>
    <property type="match status" value="1"/>
</dbReference>
<dbReference type="FunFam" id="3.40.640.10:FF:000099">
    <property type="entry name" value="LL-diaminopimelate aminotransferase, chloroplastic"/>
    <property type="match status" value="1"/>
</dbReference>
<dbReference type="Gene3D" id="3.90.1150.10">
    <property type="entry name" value="Aspartate Aminotransferase, domain 1"/>
    <property type="match status" value="1"/>
</dbReference>
<dbReference type="Gene3D" id="3.40.640.10">
    <property type="entry name" value="Type I PLP-dependent aspartate aminotransferase-like (Major domain)"/>
    <property type="match status" value="1"/>
</dbReference>
<dbReference type="HAMAP" id="MF_01642">
    <property type="entry name" value="DapL_aminotrans_1"/>
    <property type="match status" value="1"/>
</dbReference>
<dbReference type="InterPro" id="IPR004839">
    <property type="entry name" value="Aminotransferase_I/II_large"/>
</dbReference>
<dbReference type="InterPro" id="IPR019942">
    <property type="entry name" value="DapL/ALD1"/>
</dbReference>
<dbReference type="InterPro" id="IPR015424">
    <property type="entry name" value="PyrdxlP-dep_Trfase"/>
</dbReference>
<dbReference type="InterPro" id="IPR015421">
    <property type="entry name" value="PyrdxlP-dep_Trfase_major"/>
</dbReference>
<dbReference type="InterPro" id="IPR015422">
    <property type="entry name" value="PyrdxlP-dep_Trfase_small"/>
</dbReference>
<dbReference type="NCBIfam" id="TIGR03542">
    <property type="entry name" value="DAPAT_plant"/>
    <property type="match status" value="1"/>
</dbReference>
<dbReference type="PANTHER" id="PTHR43144">
    <property type="entry name" value="AMINOTRANSFERASE"/>
    <property type="match status" value="1"/>
</dbReference>
<dbReference type="Pfam" id="PF00155">
    <property type="entry name" value="Aminotran_1_2"/>
    <property type="match status" value="1"/>
</dbReference>
<dbReference type="SUPFAM" id="SSF53383">
    <property type="entry name" value="PLP-dependent transferases"/>
    <property type="match status" value="1"/>
</dbReference>
<accession>Q8F814</accession>
<comment type="function">
    <text evidence="1">Involved in the synthesis of meso-diaminopimelate (m-DAP or DL-DAP), required for both lysine and peptidoglycan biosynthesis. Catalyzes the direct conversion of tetrahydrodipicolinate to LL-diaminopimelate.</text>
</comment>
<comment type="catalytic activity">
    <reaction evidence="1">
        <text>(2S,6S)-2,6-diaminopimelate + 2-oxoglutarate = (S)-2,3,4,5-tetrahydrodipicolinate + L-glutamate + H2O + H(+)</text>
        <dbReference type="Rhea" id="RHEA:23988"/>
        <dbReference type="ChEBI" id="CHEBI:15377"/>
        <dbReference type="ChEBI" id="CHEBI:15378"/>
        <dbReference type="ChEBI" id="CHEBI:16810"/>
        <dbReference type="ChEBI" id="CHEBI:16845"/>
        <dbReference type="ChEBI" id="CHEBI:29985"/>
        <dbReference type="ChEBI" id="CHEBI:57609"/>
        <dbReference type="EC" id="2.6.1.83"/>
    </reaction>
</comment>
<comment type="cofactor">
    <cofactor evidence="1">
        <name>pyridoxal 5'-phosphate</name>
        <dbReference type="ChEBI" id="CHEBI:597326"/>
    </cofactor>
</comment>
<comment type="pathway">
    <text evidence="1">Amino-acid biosynthesis; L-lysine biosynthesis via DAP pathway; LL-2,6-diaminopimelate from (S)-tetrahydrodipicolinate (aminotransferase route): step 1/1.</text>
</comment>
<comment type="subunit">
    <text evidence="1">Homodimer.</text>
</comment>
<comment type="similarity">
    <text evidence="1">Belongs to the class-I pyridoxal-phosphate-dependent aminotransferase family. LL-diaminopimelate aminotransferase subfamily.</text>
</comment>
<gene>
    <name evidence="1" type="primary">dapL</name>
    <name type="ordered locus">LA_0776</name>
</gene>
<evidence type="ECO:0000255" key="1">
    <source>
        <dbReference type="HAMAP-Rule" id="MF_01642"/>
    </source>
</evidence>
<feature type="chain" id="PRO_0000342247" description="LL-diaminopimelate aminotransferase">
    <location>
        <begin position="1"/>
        <end position="408"/>
    </location>
</feature>
<feature type="binding site" evidence="1">
    <location>
        <position position="15"/>
    </location>
    <ligand>
        <name>substrate</name>
    </ligand>
</feature>
<feature type="binding site" evidence="1">
    <location>
        <position position="42"/>
    </location>
    <ligand>
        <name>substrate</name>
    </ligand>
</feature>
<feature type="binding site" evidence="1">
    <location>
        <position position="72"/>
    </location>
    <ligand>
        <name>pyridoxal 5'-phosphate</name>
        <dbReference type="ChEBI" id="CHEBI:597326"/>
    </ligand>
</feature>
<feature type="binding site" evidence="1">
    <location>
        <begin position="108"/>
        <end position="109"/>
    </location>
    <ligand>
        <name>pyridoxal 5'-phosphate</name>
        <dbReference type="ChEBI" id="CHEBI:597326"/>
    </ligand>
</feature>
<feature type="binding site" evidence="1">
    <location>
        <position position="109"/>
    </location>
    <ligand>
        <name>substrate</name>
    </ligand>
</feature>
<feature type="binding site" evidence="1">
    <location>
        <position position="132"/>
    </location>
    <ligand>
        <name>pyridoxal 5'-phosphate</name>
        <dbReference type="ChEBI" id="CHEBI:597326"/>
    </ligand>
</feature>
<feature type="binding site" evidence="1">
    <location>
        <position position="132"/>
    </location>
    <ligand>
        <name>substrate</name>
    </ligand>
</feature>
<feature type="binding site" evidence="1">
    <location>
        <position position="187"/>
    </location>
    <ligand>
        <name>pyridoxal 5'-phosphate</name>
        <dbReference type="ChEBI" id="CHEBI:597326"/>
    </ligand>
</feature>
<feature type="binding site" evidence="1">
    <location>
        <position position="187"/>
    </location>
    <ligand>
        <name>substrate</name>
    </ligand>
</feature>
<feature type="binding site" evidence="1">
    <location>
        <position position="218"/>
    </location>
    <ligand>
        <name>pyridoxal 5'-phosphate</name>
        <dbReference type="ChEBI" id="CHEBI:597326"/>
    </ligand>
</feature>
<feature type="binding site" evidence="1">
    <location>
        <begin position="246"/>
        <end position="248"/>
    </location>
    <ligand>
        <name>pyridoxal 5'-phosphate</name>
        <dbReference type="ChEBI" id="CHEBI:597326"/>
    </ligand>
</feature>
<feature type="binding site" evidence="1">
    <location>
        <position position="257"/>
    </location>
    <ligand>
        <name>pyridoxal 5'-phosphate</name>
        <dbReference type="ChEBI" id="CHEBI:597326"/>
    </ligand>
</feature>
<feature type="binding site" evidence="1">
    <location>
        <position position="292"/>
    </location>
    <ligand>
        <name>pyridoxal 5'-phosphate</name>
        <dbReference type="ChEBI" id="CHEBI:597326"/>
    </ligand>
</feature>
<feature type="binding site" evidence="1">
    <location>
        <position position="292"/>
    </location>
    <ligand>
        <name>substrate</name>
    </ligand>
</feature>
<feature type="binding site" evidence="1">
    <location>
        <position position="388"/>
    </location>
    <ligand>
        <name>substrate</name>
    </ligand>
</feature>
<feature type="modified residue" description="N6-(pyridoxal phosphate)lysine" evidence="1">
    <location>
        <position position="249"/>
    </location>
</feature>
<sequence>MANINENYLKLKAGYLFPEISKRVKIYSEKNPSAKIIRLGIGDVTLPIVPSVVDAMVEASKEMGTVGGFHGYGPEQGYSFLLKSIADHDYGSLGIKIDESEIFVSDGSKCDCGNIQEIFSTDSKIAVADPVYPVYVDTNVMAGRTGEIGPDGRYSNLIYMPATKENGFQPEIPKEKADIVYLCYPNNPTGTVTTKESLKAWVEYAKKNNSIILYDSAYEAFISEPGVPRSIYEVEGAKEVAIEFRSFSKTAGFTGLRCAYIVIPKELKGKTRSGEEVSLNSLWNRRHTTKFNGVSYVTQKGAEACYSPQGKKEIQTSIAYYMANASKIRDGLKKAGYEVFGGVNAPYIWLKTSDNLSSWDFFDKLLNKAQVVGTPGSGFGPAGEGYFRLSAFGKKEDVEEAIARITSL</sequence>